<protein>
    <recommendedName>
        <fullName>Cyclin-L1</fullName>
    </recommendedName>
</protein>
<accession>Q7ZVX0</accession>
<name>CCNL1_DANRE</name>
<evidence type="ECO:0000250" key="1"/>
<evidence type="ECO:0000250" key="2">
    <source>
        <dbReference type="UniProtKB" id="Q9UK58"/>
    </source>
</evidence>
<evidence type="ECO:0000256" key="3">
    <source>
        <dbReference type="SAM" id="MobiDB-lite"/>
    </source>
</evidence>
<evidence type="ECO:0000269" key="4">
    <source>
    </source>
</evidence>
<evidence type="ECO:0000305" key="5"/>
<organism>
    <name type="scientific">Danio rerio</name>
    <name type="common">Zebrafish</name>
    <name type="synonym">Brachydanio rerio</name>
    <dbReference type="NCBI Taxonomy" id="7955"/>
    <lineage>
        <taxon>Eukaryota</taxon>
        <taxon>Metazoa</taxon>
        <taxon>Chordata</taxon>
        <taxon>Craniata</taxon>
        <taxon>Vertebrata</taxon>
        <taxon>Euteleostomi</taxon>
        <taxon>Actinopterygii</taxon>
        <taxon>Neopterygii</taxon>
        <taxon>Teleostei</taxon>
        <taxon>Ostariophysi</taxon>
        <taxon>Cypriniformes</taxon>
        <taxon>Danionidae</taxon>
        <taxon>Danioninae</taxon>
        <taxon>Danio</taxon>
    </lineage>
</organism>
<comment type="function">
    <text evidence="2">Involved in pre-mRNA splicing.</text>
</comment>
<comment type="subcellular location">
    <subcellularLocation>
        <location evidence="2">Nucleus speckle</location>
    </subcellularLocation>
    <subcellularLocation>
        <location evidence="2">Nucleus</location>
        <location evidence="2">Nucleoplasm</location>
    </subcellularLocation>
    <text evidence="2">Found in nuclear intrachromatin granules clusters (IGC), also called nuclear speckles, which are storage compartments for nuclear proteins involved in mRNA processing.</text>
</comment>
<comment type="domain">
    <text evidence="1">Contains a RS region (arginine-serine dipeptide repeat) within the C-terminal domain which is the hallmark of the SR family of splicing factors. This region probably plays a role in protein-protein interactions (By similarity).</text>
</comment>
<comment type="similarity">
    <text evidence="5">Belongs to the cyclin family. Cyclin L subfamily.</text>
</comment>
<reference key="1">
    <citation type="submission" date="2003-01" db="EMBL/GenBank/DDBJ databases">
        <authorList>
            <consortium name="NIH - Zebrafish Gene Collection (ZGC) project"/>
        </authorList>
    </citation>
    <scope>NUCLEOTIDE SEQUENCE [LARGE SCALE MRNA]</scope>
    <source>
        <strain>AB</strain>
    </source>
</reference>
<reference key="2">
    <citation type="journal article" date="2008" name="J. Proteome Res.">
        <title>Online automated in vivo zebrafish phosphoproteomics: from large-scale analysis down to a single embryo.</title>
        <authorList>
            <person name="Lemeer S."/>
            <person name="Pinkse M.W.H."/>
            <person name="Mohammed S."/>
            <person name="van Breukelen B."/>
            <person name="den Hertog J."/>
            <person name="Slijper M."/>
            <person name="Heck A.J.R."/>
        </authorList>
    </citation>
    <scope>PHOSPHORYLATION [LARGE SCALE ANALYSIS] AT SER-409 AND SER-412</scope>
    <scope>IDENTIFICATION BY MASS SPECTROMETRY</scope>
    <source>
        <tissue>Embryo</tissue>
    </source>
</reference>
<sequence>MSLGMLSPHLNTPPPNNQGILIGDKVYSEVFLAIDNSIIPEDRLSTTPSMLDGLDHETETDLRILGCERIQSAGILLRLPQVAMATGQVIFQRFFFSKSFVKHNFEIVAMACVNLASKIEESPRRVRDVINVFHHLKQGKGKKSTPLILDQNYINTKNQVIKAERRILKELGFCVHVKHPHKIIVMYLQVLECEKNQMLVQTAWNYMNDALRTSAFVRFEPETIACACIYLAARVLQIPLPSKPHWFLLFGATKEDIKEICINTMKLYSREKPHSEQLERQVEKRKIFLEEARLKARGQNPNGTPALASINGFSPASKPSSPRDVKMDDKSPNSKLKEPENRQLFAKSPLNGSIKKEDGKVFQNGKNHSRSRSRSTSRSPHRHRRSHSGTYSSHSSHSPSPRQKARRPSPISQLRTDRDRPSETSRHSNKRRRSRSRSRSNSRERVRDRDHIKHKQERSGSGHHWDHRDRERDRSRDHGRNKRQSRSHSGHSHSRHRR</sequence>
<proteinExistence type="evidence at protein level"/>
<dbReference type="EMBL" id="BC045378">
    <property type="protein sequence ID" value="AAH45378.1"/>
    <property type="molecule type" value="mRNA"/>
</dbReference>
<dbReference type="RefSeq" id="NP_956034.1">
    <property type="nucleotide sequence ID" value="NM_199740.1"/>
</dbReference>
<dbReference type="SMR" id="Q7ZVX0"/>
<dbReference type="FunCoup" id="Q7ZVX0">
    <property type="interactions" value="559"/>
</dbReference>
<dbReference type="STRING" id="7955.ENSDARP00000021380"/>
<dbReference type="iPTMnet" id="Q7ZVX0"/>
<dbReference type="PaxDb" id="7955-ENSDARP00000021380"/>
<dbReference type="GeneID" id="326088"/>
<dbReference type="KEGG" id="dre:326088"/>
<dbReference type="AGR" id="ZFIN:ZDB-GENE-030131-4813"/>
<dbReference type="CTD" id="326088"/>
<dbReference type="ZFIN" id="ZDB-GENE-030131-4813">
    <property type="gene designation" value="ccnl1b"/>
</dbReference>
<dbReference type="eggNOG" id="KOG0835">
    <property type="taxonomic scope" value="Eukaryota"/>
</dbReference>
<dbReference type="InParanoid" id="Q7ZVX0"/>
<dbReference type="OrthoDB" id="10264655at2759"/>
<dbReference type="PhylomeDB" id="Q7ZVX0"/>
<dbReference type="PRO" id="PR:Q7ZVX0"/>
<dbReference type="Proteomes" id="UP000000437">
    <property type="component" value="Chromosome 2"/>
</dbReference>
<dbReference type="GO" id="GO:0016607">
    <property type="term" value="C:nuclear speck"/>
    <property type="evidence" value="ECO:0007669"/>
    <property type="project" value="UniProtKB-SubCell"/>
</dbReference>
<dbReference type="GO" id="GO:0005634">
    <property type="term" value="C:nucleus"/>
    <property type="evidence" value="ECO:0000318"/>
    <property type="project" value="GO_Central"/>
</dbReference>
<dbReference type="GO" id="GO:0016538">
    <property type="term" value="F:cyclin-dependent protein serine/threonine kinase regulator activity"/>
    <property type="evidence" value="ECO:0000318"/>
    <property type="project" value="GO_Central"/>
</dbReference>
<dbReference type="GO" id="GO:0006357">
    <property type="term" value="P:regulation of transcription by RNA polymerase II"/>
    <property type="evidence" value="ECO:0007669"/>
    <property type="project" value="InterPro"/>
</dbReference>
<dbReference type="CDD" id="cd20592">
    <property type="entry name" value="CYCLIN_CCNL1_rpt2"/>
    <property type="match status" value="1"/>
</dbReference>
<dbReference type="FunFam" id="1.10.472.10:FF:000014">
    <property type="entry name" value="cyclin-L1 isoform X1"/>
    <property type="match status" value="1"/>
</dbReference>
<dbReference type="FunFam" id="1.10.472.10:FF:000016">
    <property type="entry name" value="cyclin-L1 isoform X1"/>
    <property type="match status" value="1"/>
</dbReference>
<dbReference type="Gene3D" id="1.10.472.10">
    <property type="entry name" value="Cyclin-like"/>
    <property type="match status" value="2"/>
</dbReference>
<dbReference type="InterPro" id="IPR013763">
    <property type="entry name" value="Cyclin-like_dom"/>
</dbReference>
<dbReference type="InterPro" id="IPR036915">
    <property type="entry name" value="Cyclin-like_sf"/>
</dbReference>
<dbReference type="InterPro" id="IPR043198">
    <property type="entry name" value="Cyclin/Ssn8"/>
</dbReference>
<dbReference type="InterPro" id="IPR004367">
    <property type="entry name" value="Cyclin_C-dom"/>
</dbReference>
<dbReference type="InterPro" id="IPR006671">
    <property type="entry name" value="Cyclin_N"/>
</dbReference>
<dbReference type="PANTHER" id="PTHR10026">
    <property type="entry name" value="CYCLIN"/>
    <property type="match status" value="1"/>
</dbReference>
<dbReference type="Pfam" id="PF02984">
    <property type="entry name" value="Cyclin_C"/>
    <property type="match status" value="1"/>
</dbReference>
<dbReference type="Pfam" id="PF00134">
    <property type="entry name" value="Cyclin_N"/>
    <property type="match status" value="1"/>
</dbReference>
<dbReference type="PIRSF" id="PIRSF036580">
    <property type="entry name" value="Cyclin_L"/>
    <property type="match status" value="1"/>
</dbReference>
<dbReference type="SMART" id="SM00385">
    <property type="entry name" value="CYCLIN"/>
    <property type="match status" value="2"/>
</dbReference>
<dbReference type="SMART" id="SM01332">
    <property type="entry name" value="Cyclin_C"/>
    <property type="match status" value="1"/>
</dbReference>
<dbReference type="SUPFAM" id="SSF47954">
    <property type="entry name" value="Cyclin-like"/>
    <property type="match status" value="2"/>
</dbReference>
<keyword id="KW-0195">Cyclin</keyword>
<keyword id="KW-0539">Nucleus</keyword>
<keyword id="KW-0597">Phosphoprotein</keyword>
<keyword id="KW-1185">Reference proteome</keyword>
<keyword id="KW-0677">Repeat</keyword>
<keyword id="KW-0804">Transcription</keyword>
<keyword id="KW-0805">Transcription regulation</keyword>
<feature type="chain" id="PRO_0000080485" description="Cyclin-L1">
    <location>
        <begin position="1"/>
        <end position="498"/>
    </location>
</feature>
<feature type="region of interest" description="Cyclin-like 1">
    <location>
        <begin position="68"/>
        <end position="169"/>
    </location>
</feature>
<feature type="region of interest" description="Cyclin-like 2">
    <location>
        <begin position="182"/>
        <end position="266"/>
    </location>
</feature>
<feature type="region of interest" description="Disordered" evidence="3">
    <location>
        <begin position="294"/>
        <end position="498"/>
    </location>
</feature>
<feature type="region of interest" description="RS">
    <location>
        <begin position="366"/>
        <end position="396"/>
    </location>
</feature>
<feature type="compositionally biased region" description="Polar residues" evidence="3">
    <location>
        <begin position="311"/>
        <end position="320"/>
    </location>
</feature>
<feature type="compositionally biased region" description="Basic and acidic residues" evidence="3">
    <location>
        <begin position="321"/>
        <end position="341"/>
    </location>
</feature>
<feature type="compositionally biased region" description="Basic residues" evidence="3">
    <location>
        <begin position="367"/>
        <end position="387"/>
    </location>
</feature>
<feature type="compositionally biased region" description="Low complexity" evidence="3">
    <location>
        <begin position="388"/>
        <end position="402"/>
    </location>
</feature>
<feature type="compositionally biased region" description="Basic and acidic residues" evidence="3">
    <location>
        <begin position="415"/>
        <end position="426"/>
    </location>
</feature>
<feature type="compositionally biased region" description="Basic residues" evidence="3">
    <location>
        <begin position="427"/>
        <end position="440"/>
    </location>
</feature>
<feature type="compositionally biased region" description="Basic and acidic residues" evidence="3">
    <location>
        <begin position="441"/>
        <end position="478"/>
    </location>
</feature>
<feature type="compositionally biased region" description="Basic residues" evidence="3">
    <location>
        <begin position="479"/>
        <end position="498"/>
    </location>
</feature>
<feature type="modified residue" description="Phosphoserine" evidence="4">
    <location>
        <position position="409"/>
    </location>
</feature>
<feature type="modified residue" description="Phosphoserine" evidence="4">
    <location>
        <position position="412"/>
    </location>
</feature>
<gene>
    <name type="primary">ccnl1</name>
    <name type="ORF">zgc:55544</name>
</gene>